<sequence>MAAAFSSTVGAPASTPTNFLGKKLKKQVTSAVNYHGKSSNINRFKVMAKELDEGKQTDQDRWKGLAYDISDDQQDITRGKGFVDSLFQAPTGDGTHEAVLSSYEYLSQGLRTYDFDNTMGGFYIAPAFMDKLVVHISKNFMTLPNIKVPLILGIWGGKGQGKSFQCELVFAKMGINPIMMSAGELESGNAGEPAKLIRQRYREAADIIKKGKMCCLFINDLDAGAGRMGGTTQYTVNNQMVNATLMNIADNPTNVQLPGMYNKEDNPRVPIIVTGNDFSTLYAPLIRDGRMEKFYWAPTRDDRVGVCKGIFRTDNVPDEDIVKIVDSFPGQSIDFFGALRARVYDDEVRKWVSDTGVENIGKRLVNSREGPPEFEQPKMTIEKLMEYGYMLVKEQENVKRVQLAEQYLSEAALGDANSDAMKTGSFYGQGAQQAGNLPVPEGCTDPVAKNFDPTARSDDGSCLYTF</sequence>
<keyword id="KW-0025">Alternative splicing</keyword>
<keyword id="KW-0067">ATP-binding</keyword>
<keyword id="KW-0150">Chloroplast</keyword>
<keyword id="KW-0903">Direct protein sequencing</keyword>
<keyword id="KW-0547">Nucleotide-binding</keyword>
<keyword id="KW-0934">Plastid</keyword>
<keyword id="KW-1185">Reference proteome</keyword>
<keyword id="KW-0809">Transit peptide</keyword>
<protein>
    <recommendedName>
        <fullName>Ribulose bisphosphate carboxylase/oxygenase activase, chloroplastic</fullName>
        <shortName>RA</shortName>
        <shortName>RuBisCO activase</shortName>
    </recommendedName>
</protein>
<organism>
    <name type="scientific">Oryza sativa subsp. japonica</name>
    <name type="common">Rice</name>
    <dbReference type="NCBI Taxonomy" id="39947"/>
    <lineage>
        <taxon>Eukaryota</taxon>
        <taxon>Viridiplantae</taxon>
        <taxon>Streptophyta</taxon>
        <taxon>Embryophyta</taxon>
        <taxon>Tracheophyta</taxon>
        <taxon>Spermatophyta</taxon>
        <taxon>Magnoliopsida</taxon>
        <taxon>Liliopsida</taxon>
        <taxon>Poales</taxon>
        <taxon>Poaceae</taxon>
        <taxon>BOP clade</taxon>
        <taxon>Oryzoideae</taxon>
        <taxon>Oryzeae</taxon>
        <taxon>Oryzinae</taxon>
        <taxon>Oryza</taxon>
        <taxon>Oryza sativa</taxon>
    </lineage>
</organism>
<reference key="1">
    <citation type="online journal article" date="1997" name="Plant Gene Register">
        <title>Cloning and sequencing of a rice cDNA encoding Rubisco activase.</title>
        <authorList>
            <person name="To K.-Y."/>
            <person name="Suen D.-F."/>
            <person name="Cheng M.-C."/>
            <person name="Chen L.-F.O."/>
            <person name="Chen S.C.-G."/>
        </authorList>
        <locator>PGR97-011</locator>
    </citation>
    <scope>NUCLEOTIDE SEQUENCE [MRNA] (ISOFORM 2)</scope>
    <source>
        <strain>cv. Tainung 67</strain>
        <tissue>Leaf</tissue>
    </source>
</reference>
<reference key="2">
    <citation type="journal article" date="2005" name="Plant Cell">
        <title>Functional isolation of novel nuclear proteins showing a variety of subnuclear localizations.</title>
        <authorList>
            <person name="Moriguchi K."/>
            <person name="Suzuki T."/>
            <person name="Ito Y."/>
            <person name="Yamazaki Y."/>
            <person name="Niwa Y."/>
            <person name="Kurata N."/>
        </authorList>
    </citation>
    <scope>NUCLEOTIDE SEQUENCE [MRNA] (ISOFORM 1)</scope>
    <source>
        <tissue>Panicle</tissue>
    </source>
</reference>
<reference key="3">
    <citation type="submission" date="1999-11" db="EMBL/GenBank/DDBJ databases">
        <title>Oryza sativa OsrcaA2 mRNA for RuBisCO activase small isoform precursor.</title>
        <authorList>
            <person name="Komatsu S."/>
            <person name="Zhang Z."/>
        </authorList>
    </citation>
    <scope>NUCLEOTIDE SEQUENCE [MRNA] (ISOFORMS 1 AND 2)</scope>
    <source>
        <strain>cv. Nipponbare</strain>
    </source>
</reference>
<reference key="4">
    <citation type="journal article" date="2005" name="BMC Biol.">
        <title>The sequence of rice chromosomes 11 and 12, rich in disease resistance genes and recent gene duplications.</title>
        <authorList>
            <consortium name="The rice chromosomes 11 and 12 sequencing consortia"/>
        </authorList>
    </citation>
    <scope>NUCLEOTIDE SEQUENCE [LARGE SCALE GENOMIC DNA]</scope>
    <source>
        <strain>cv. Nipponbare</strain>
    </source>
</reference>
<reference key="5">
    <citation type="journal article" date="2005" name="Nature">
        <title>The map-based sequence of the rice genome.</title>
        <authorList>
            <consortium name="International rice genome sequencing project (IRGSP)"/>
        </authorList>
    </citation>
    <scope>NUCLEOTIDE SEQUENCE [LARGE SCALE GENOMIC DNA]</scope>
    <source>
        <strain>cv. Nipponbare</strain>
    </source>
</reference>
<reference key="6">
    <citation type="journal article" date="2008" name="Nucleic Acids Res.">
        <title>The rice annotation project database (RAP-DB): 2008 update.</title>
        <authorList>
            <consortium name="The rice annotation project (RAP)"/>
        </authorList>
    </citation>
    <scope>GENOME REANNOTATION</scope>
    <source>
        <strain>cv. Nipponbare</strain>
    </source>
</reference>
<reference key="7">
    <citation type="journal article" date="2013" name="Rice">
        <title>Improvement of the Oryza sativa Nipponbare reference genome using next generation sequence and optical map data.</title>
        <authorList>
            <person name="Kawahara Y."/>
            <person name="de la Bastide M."/>
            <person name="Hamilton J.P."/>
            <person name="Kanamori H."/>
            <person name="McCombie W.R."/>
            <person name="Ouyang S."/>
            <person name="Schwartz D.C."/>
            <person name="Tanaka T."/>
            <person name="Wu J."/>
            <person name="Zhou S."/>
            <person name="Childs K.L."/>
            <person name="Davidson R.M."/>
            <person name="Lin H."/>
            <person name="Quesada-Ocampo L."/>
            <person name="Vaillancourt B."/>
            <person name="Sakai H."/>
            <person name="Lee S.S."/>
            <person name="Kim J."/>
            <person name="Numa H."/>
            <person name="Itoh T."/>
            <person name="Buell C.R."/>
            <person name="Matsumoto T."/>
        </authorList>
    </citation>
    <scope>GENOME REANNOTATION</scope>
    <source>
        <strain>cv. Nipponbare</strain>
    </source>
</reference>
<reference key="8">
    <citation type="journal article" date="2005" name="PLoS Biol.">
        <title>The genomes of Oryza sativa: a history of duplications.</title>
        <authorList>
            <person name="Yu J."/>
            <person name="Wang J."/>
            <person name="Lin W."/>
            <person name="Li S."/>
            <person name="Li H."/>
            <person name="Zhou J."/>
            <person name="Ni P."/>
            <person name="Dong W."/>
            <person name="Hu S."/>
            <person name="Zeng C."/>
            <person name="Zhang J."/>
            <person name="Zhang Y."/>
            <person name="Li R."/>
            <person name="Xu Z."/>
            <person name="Li S."/>
            <person name="Li X."/>
            <person name="Zheng H."/>
            <person name="Cong L."/>
            <person name="Lin L."/>
            <person name="Yin J."/>
            <person name="Geng J."/>
            <person name="Li G."/>
            <person name="Shi J."/>
            <person name="Liu J."/>
            <person name="Lv H."/>
            <person name="Li J."/>
            <person name="Wang J."/>
            <person name="Deng Y."/>
            <person name="Ran L."/>
            <person name="Shi X."/>
            <person name="Wang X."/>
            <person name="Wu Q."/>
            <person name="Li C."/>
            <person name="Ren X."/>
            <person name="Wang J."/>
            <person name="Wang X."/>
            <person name="Li D."/>
            <person name="Liu D."/>
            <person name="Zhang X."/>
            <person name="Ji Z."/>
            <person name="Zhao W."/>
            <person name="Sun Y."/>
            <person name="Zhang Z."/>
            <person name="Bao J."/>
            <person name="Han Y."/>
            <person name="Dong L."/>
            <person name="Ji J."/>
            <person name="Chen P."/>
            <person name="Wu S."/>
            <person name="Liu J."/>
            <person name="Xiao Y."/>
            <person name="Bu D."/>
            <person name="Tan J."/>
            <person name="Yang L."/>
            <person name="Ye C."/>
            <person name="Zhang J."/>
            <person name="Xu J."/>
            <person name="Zhou Y."/>
            <person name="Yu Y."/>
            <person name="Zhang B."/>
            <person name="Zhuang S."/>
            <person name="Wei H."/>
            <person name="Liu B."/>
            <person name="Lei M."/>
            <person name="Yu H."/>
            <person name="Li Y."/>
            <person name="Xu H."/>
            <person name="Wei S."/>
            <person name="He X."/>
            <person name="Fang L."/>
            <person name="Zhang Z."/>
            <person name="Zhang Y."/>
            <person name="Huang X."/>
            <person name="Su Z."/>
            <person name="Tong W."/>
            <person name="Li J."/>
            <person name="Tong Z."/>
            <person name="Li S."/>
            <person name="Ye J."/>
            <person name="Wang L."/>
            <person name="Fang L."/>
            <person name="Lei T."/>
            <person name="Chen C.-S."/>
            <person name="Chen H.-C."/>
            <person name="Xu Z."/>
            <person name="Li H."/>
            <person name="Huang H."/>
            <person name="Zhang F."/>
            <person name="Xu H."/>
            <person name="Li N."/>
            <person name="Zhao C."/>
            <person name="Li S."/>
            <person name="Dong L."/>
            <person name="Huang Y."/>
            <person name="Li L."/>
            <person name="Xi Y."/>
            <person name="Qi Q."/>
            <person name="Li W."/>
            <person name="Zhang B."/>
            <person name="Hu W."/>
            <person name="Zhang Y."/>
            <person name="Tian X."/>
            <person name="Jiao Y."/>
            <person name="Liang X."/>
            <person name="Jin J."/>
            <person name="Gao L."/>
            <person name="Zheng W."/>
            <person name="Hao B."/>
            <person name="Liu S.-M."/>
            <person name="Wang W."/>
            <person name="Yuan L."/>
            <person name="Cao M."/>
            <person name="McDermott J."/>
            <person name="Samudrala R."/>
            <person name="Wang J."/>
            <person name="Wong G.K.-S."/>
            <person name="Yang H."/>
        </authorList>
    </citation>
    <scope>NUCLEOTIDE SEQUENCE [LARGE SCALE GENOMIC DNA]</scope>
    <source>
        <strain>cv. Nipponbare</strain>
    </source>
</reference>
<reference key="9">
    <citation type="journal article" date="2003" name="Science">
        <title>Collection, mapping, and annotation of over 28,000 cDNA clones from japonica rice.</title>
        <authorList>
            <consortium name="The rice full-length cDNA consortium"/>
        </authorList>
    </citation>
    <scope>NUCLEOTIDE SEQUENCE [LARGE SCALE MRNA] (ISOFORM 2)</scope>
    <source>
        <strain>cv. Nipponbare</strain>
    </source>
</reference>
<reference key="10">
    <citation type="journal article" date="2006" name="Proteomics">
        <title>Proteomic analysis of rice leaf, stem and root tissues during growth course.</title>
        <authorList>
            <person name="Nozu Y."/>
            <person name="Tsugita A."/>
            <person name="Kamijo K."/>
        </authorList>
    </citation>
    <scope>PROTEIN SEQUENCE [LARGE SCALE ANALYSIS] OF 49-56 AND 87-93</scope>
    <scope>IDENTIFICATION BY MASS SPECTROMETRY</scope>
    <source>
        <strain>cv. Nipponbare</strain>
    </source>
</reference>
<name>RCA_ORYSJ</name>
<comment type="function">
    <text>Activation of RuBisCO (ribulose-1,5-bisphosphate carboxylase/oxygenase; EC 4.1.1.39) involves the ATP-dependent carboxylation of the epsilon-amino group of lysine leading to a carbamate structure.</text>
</comment>
<comment type="subcellular location">
    <subcellularLocation>
        <location>Plastid</location>
        <location>Chloroplast stroma</location>
    </subcellularLocation>
</comment>
<comment type="alternative products">
    <event type="alternative splicing"/>
    <isoform>
        <id>P93431-1</id>
        <name>1</name>
        <name>RCAA1</name>
        <sequence type="displayed"/>
    </isoform>
    <isoform>
        <id>P93431-2</id>
        <name>2</name>
        <name>RCAA2</name>
        <sequence type="described" ref="VSP_019480 VSP_019481"/>
    </isoform>
</comment>
<comment type="similarity">
    <text evidence="7">Belongs to the RuBisCO activase family.</text>
</comment>
<comment type="sequence caution" evidence="7">
    <conflict type="erroneous gene model prediction">
        <sequence resource="EMBL-CDS" id="AAX95285"/>
    </conflict>
</comment>
<comment type="sequence caution" evidence="7">
    <conflict type="erroneous gene model prediction">
        <sequence resource="EMBL-CDS" id="AAX95414"/>
    </conflict>
</comment>
<comment type="sequence caution" evidence="7">
    <conflict type="erroneous gene model prediction">
        <sequence resource="EMBL-CDS" id="BAF28918"/>
    </conflict>
</comment>
<feature type="transit peptide" description="Chloroplast" evidence="3">
    <location>
        <begin position="1"/>
        <end position="48"/>
    </location>
</feature>
<feature type="chain" id="PRO_0000030238" description="Ribulose bisphosphate carboxylase/oxygenase activase, chloroplastic">
    <location>
        <begin position="49"/>
        <end position="466"/>
    </location>
</feature>
<feature type="region of interest" description="Disordered" evidence="2">
    <location>
        <begin position="429"/>
        <end position="454"/>
    </location>
</feature>
<feature type="binding site" evidence="1">
    <location>
        <begin position="156"/>
        <end position="163"/>
    </location>
    <ligand>
        <name>ATP</name>
        <dbReference type="ChEBI" id="CHEBI:30616"/>
    </ligand>
</feature>
<feature type="splice variant" id="VSP_019480" description="In isoform 2." evidence="4 5 6">
    <original>QGAQQ</original>
    <variation>SAPSS</variation>
    <location>
        <begin position="429"/>
        <end position="433"/>
    </location>
</feature>
<feature type="splice variant" id="VSP_019481" description="In isoform 2." evidence="4 5 6">
    <location>
        <begin position="434"/>
        <end position="466"/>
    </location>
</feature>
<feature type="sequence conflict" description="In Ref. 1; AAC28134." evidence="7" ref="1">
    <original>A</original>
    <variation>S</variation>
    <location>
        <position position="127"/>
    </location>
</feature>
<feature type="sequence conflict" description="In Ref. 1; AAC28134." evidence="7" ref="1">
    <location>
        <position position="190"/>
    </location>
</feature>
<feature type="sequence conflict" description="In Ref. 1; AAC28134." evidence="7" ref="1">
    <original>M</original>
    <variation>I</variation>
    <location>
        <position position="385"/>
    </location>
</feature>
<dbReference type="EMBL" id="U74321">
    <property type="protein sequence ID" value="AAC28134.1"/>
    <property type="molecule type" value="mRNA"/>
</dbReference>
<dbReference type="EMBL" id="AB110180">
    <property type="protein sequence ID" value="BAC78572.1"/>
    <property type="molecule type" value="mRNA"/>
</dbReference>
<dbReference type="EMBL" id="AB034698">
    <property type="protein sequence ID" value="BAA97583.1"/>
    <property type="molecule type" value="mRNA"/>
</dbReference>
<dbReference type="EMBL" id="AB034748">
    <property type="protein sequence ID" value="BAA97584.1"/>
    <property type="molecule type" value="mRNA"/>
</dbReference>
<dbReference type="EMBL" id="AC133008">
    <property type="protein sequence ID" value="AAX95414.1"/>
    <property type="status" value="ALT_SEQ"/>
    <property type="molecule type" value="Genomic_DNA"/>
</dbReference>
<dbReference type="EMBL" id="AC137064">
    <property type="protein sequence ID" value="AAX95285.1"/>
    <property type="status" value="ALT_SEQ"/>
    <property type="molecule type" value="Genomic_DNA"/>
</dbReference>
<dbReference type="EMBL" id="AC137064">
    <property type="protein sequence ID" value="AAX95286.1"/>
    <property type="molecule type" value="Genomic_DNA"/>
</dbReference>
<dbReference type="EMBL" id="DP000010">
    <property type="protein sequence ID" value="ABA95522.1"/>
    <property type="molecule type" value="Genomic_DNA"/>
</dbReference>
<dbReference type="EMBL" id="DP000010">
    <property type="protein sequence ID" value="ABA95523.1"/>
    <property type="molecule type" value="Genomic_DNA"/>
</dbReference>
<dbReference type="EMBL" id="AP008217">
    <property type="protein sequence ID" value="BAF28918.2"/>
    <property type="status" value="ALT_SEQ"/>
    <property type="molecule type" value="Genomic_DNA"/>
</dbReference>
<dbReference type="EMBL" id="AP014967">
    <property type="protein sequence ID" value="BAT15415.1"/>
    <property type="molecule type" value="Genomic_DNA"/>
</dbReference>
<dbReference type="EMBL" id="CM000148">
    <property type="protein sequence ID" value="EAZ19330.1"/>
    <property type="molecule type" value="Genomic_DNA"/>
</dbReference>
<dbReference type="EMBL" id="AK064986">
    <property type="protein sequence ID" value="BAG89309.1"/>
    <property type="molecule type" value="mRNA"/>
</dbReference>
<dbReference type="PIR" id="T04160">
    <property type="entry name" value="T04160"/>
</dbReference>
<dbReference type="RefSeq" id="XP_015616897.1">
    <property type="nucleotide sequence ID" value="XM_015761411.1"/>
</dbReference>
<dbReference type="SMR" id="P93431"/>
<dbReference type="BioGRID" id="820261">
    <property type="interactions" value="1"/>
</dbReference>
<dbReference type="FunCoup" id="P93431">
    <property type="interactions" value="1217"/>
</dbReference>
<dbReference type="IntAct" id="P93431">
    <property type="interactions" value="1"/>
</dbReference>
<dbReference type="STRING" id="39947.P93431"/>
<dbReference type="PaxDb" id="39947-P93431"/>
<dbReference type="KEGG" id="dosa:Os11g0707000"/>
<dbReference type="eggNOG" id="KOG0651">
    <property type="taxonomic scope" value="Eukaryota"/>
</dbReference>
<dbReference type="InParanoid" id="P93431"/>
<dbReference type="OMA" id="MEKFYWE"/>
<dbReference type="OrthoDB" id="2014558at2759"/>
<dbReference type="Proteomes" id="UP000000763">
    <property type="component" value="Chromosome 11"/>
</dbReference>
<dbReference type="Proteomes" id="UP000007752">
    <property type="component" value="Chromosome 11"/>
</dbReference>
<dbReference type="Proteomes" id="UP000059680">
    <property type="component" value="Chromosome 11"/>
</dbReference>
<dbReference type="GO" id="GO:0009570">
    <property type="term" value="C:chloroplast stroma"/>
    <property type="evidence" value="ECO:0000318"/>
    <property type="project" value="GO_Central"/>
</dbReference>
<dbReference type="GO" id="GO:0005524">
    <property type="term" value="F:ATP binding"/>
    <property type="evidence" value="ECO:0007669"/>
    <property type="project" value="UniProtKB-KW"/>
</dbReference>
<dbReference type="GO" id="GO:0016887">
    <property type="term" value="F:ATP hydrolysis activity"/>
    <property type="evidence" value="ECO:0007669"/>
    <property type="project" value="InterPro"/>
</dbReference>
<dbReference type="GO" id="GO:0046863">
    <property type="term" value="F:ribulose-1,5-bisphosphate carboxylase/oxygenase activator activity"/>
    <property type="evidence" value="ECO:0000318"/>
    <property type="project" value="GO_Central"/>
</dbReference>
<dbReference type="FunFam" id="1.10.8.1070:FF:000001">
    <property type="entry name" value="Ribulose bisphosphate carboxylase/oxygenase activase, chloroplastic"/>
    <property type="match status" value="1"/>
</dbReference>
<dbReference type="FunFam" id="3.40.50.300:FF:000258">
    <property type="entry name" value="Ribulose bisphosphate carboxylase/oxygenase activase, chloroplastic"/>
    <property type="match status" value="1"/>
</dbReference>
<dbReference type="Gene3D" id="1.10.8.1070">
    <property type="match status" value="1"/>
</dbReference>
<dbReference type="Gene3D" id="3.40.50.300">
    <property type="entry name" value="P-loop containing nucleotide triphosphate hydrolases"/>
    <property type="match status" value="1"/>
</dbReference>
<dbReference type="InterPro" id="IPR003959">
    <property type="entry name" value="ATPase_AAA_core"/>
</dbReference>
<dbReference type="InterPro" id="IPR027417">
    <property type="entry name" value="P-loop_NTPase"/>
</dbReference>
<dbReference type="InterPro" id="IPR044960">
    <property type="entry name" value="RCA-like"/>
</dbReference>
<dbReference type="InterPro" id="IPR048571">
    <property type="entry name" value="RuBisCO_activase_AAA_helical"/>
</dbReference>
<dbReference type="PANTHER" id="PTHR32429">
    <property type="match status" value="1"/>
</dbReference>
<dbReference type="PANTHER" id="PTHR32429:SF32">
    <property type="entry name" value="RIBULOSE BISPHOSPHATE CARBOXYLASE_OXYGENASE ACTIVASE, CHLOROPLASTIC"/>
    <property type="match status" value="1"/>
</dbReference>
<dbReference type="Pfam" id="PF00004">
    <property type="entry name" value="AAA"/>
    <property type="match status" value="1"/>
</dbReference>
<dbReference type="Pfam" id="PF21228">
    <property type="entry name" value="RuBisCO_activase_AAA_helical"/>
    <property type="match status" value="1"/>
</dbReference>
<dbReference type="SUPFAM" id="SSF52540">
    <property type="entry name" value="P-loop containing nucleoside triphosphate hydrolases"/>
    <property type="match status" value="1"/>
</dbReference>
<evidence type="ECO:0000255" key="1"/>
<evidence type="ECO:0000256" key="2">
    <source>
        <dbReference type="SAM" id="MobiDB-lite"/>
    </source>
</evidence>
<evidence type="ECO:0000269" key="3">
    <source>
    </source>
</evidence>
<evidence type="ECO:0000303" key="4">
    <source>
    </source>
</evidence>
<evidence type="ECO:0000303" key="5">
    <source ref="1"/>
</evidence>
<evidence type="ECO:0000303" key="6">
    <source ref="3"/>
</evidence>
<evidence type="ECO:0000305" key="7"/>
<gene>
    <name type="primary">RCA</name>
    <name type="synonym">RCAA1</name>
    <name type="synonym">RCAA2</name>
    <name type="ordered locus">Os11g0707000</name>
    <name type="ordered locus">LOC_Os11g47970</name>
    <name type="ORF">OsJ_033539</name>
</gene>
<accession>P93431</accession>
<accession>A3CE17</accession>
<accession>B7EAB2</accession>
<accession>Q0IQU7</accession>
<accession>Q53MC4</accession>
<accession>Q53MC5</accession>
<accession>Q53NV9</accession>
<accession>Q7XXR6</accession>
<accession>Q9LRH9</accession>
<accession>Q9LRI0</accession>
<proteinExistence type="evidence at protein level"/>